<keyword id="KW-0479">Metal-binding</keyword>
<keyword id="KW-0520">NAD</keyword>
<keyword id="KW-0521">NADP</keyword>
<keyword id="KW-0558">Oxidation</keyword>
<keyword id="KW-0560">Oxidoreductase</keyword>
<keyword id="KW-0630">Potassium</keyword>
<name>BETB_PSEP1</name>
<sequence>MARFGTQKLYIDGAYVDAGSDATFEAINPATGEVLAHVQRATEADVEKAVESAERGQKVWAAMTAMQRSRILRRAVDILRERNDELAMLETLDTGKSYSETRYVDIVTGADVLEYYAGLVPAIEGEQIPLRESSFVYTRREPLGVTVGIGAWNYPIQIALWKSAPALAAGNAMIFKPSEVTSLTTLKLAEIYTEAGLPNGVFNVLTGSGREVGTWLTEHPRIEKVSFTGGTTTGKKVMASASSSSLKEVTMELGGKSPLIICADADLDKAADIAMMANFYSSGQVCTNGTRVFIPAEMKAAFEAKIAERVARIRVGNPEDENTNFGPLVSFQHMESVLGYIAKGKEEGARVLCGGERLTAGDFAKGAFVAPTVFTDCTDDMTIVKEEIFGPVMSILTYETEEEVIRRANDTDYGLAAGVCTNDITRAHRIIHKLEAGICWINAWGESPAEMPVGGYKQSGVGRENGVSSLAQYTRIKSVQVELGGYNSVF</sequence>
<proteinExistence type="inferred from homology"/>
<organism>
    <name type="scientific">Pseudomonas putida (strain ATCC 700007 / DSM 6899 / JCM 31910 / BCRC 17059 / LMG 24140 / F1)</name>
    <dbReference type="NCBI Taxonomy" id="351746"/>
    <lineage>
        <taxon>Bacteria</taxon>
        <taxon>Pseudomonadati</taxon>
        <taxon>Pseudomonadota</taxon>
        <taxon>Gammaproteobacteria</taxon>
        <taxon>Pseudomonadales</taxon>
        <taxon>Pseudomonadaceae</taxon>
        <taxon>Pseudomonas</taxon>
    </lineage>
</organism>
<gene>
    <name evidence="1" type="primary">betB</name>
    <name type="ordered locus">Pput_4936</name>
</gene>
<reference key="1">
    <citation type="submission" date="2007-05" db="EMBL/GenBank/DDBJ databases">
        <title>Complete sequence of Pseudomonas putida F1.</title>
        <authorList>
            <consortium name="US DOE Joint Genome Institute"/>
            <person name="Copeland A."/>
            <person name="Lucas S."/>
            <person name="Lapidus A."/>
            <person name="Barry K."/>
            <person name="Detter J.C."/>
            <person name="Glavina del Rio T."/>
            <person name="Hammon N."/>
            <person name="Israni S."/>
            <person name="Dalin E."/>
            <person name="Tice H."/>
            <person name="Pitluck S."/>
            <person name="Chain P."/>
            <person name="Malfatti S."/>
            <person name="Shin M."/>
            <person name="Vergez L."/>
            <person name="Schmutz J."/>
            <person name="Larimer F."/>
            <person name="Land M."/>
            <person name="Hauser L."/>
            <person name="Kyrpides N."/>
            <person name="Lykidis A."/>
            <person name="Parales R."/>
            <person name="Richardson P."/>
        </authorList>
    </citation>
    <scope>NUCLEOTIDE SEQUENCE [LARGE SCALE GENOMIC DNA]</scope>
    <source>
        <strain>ATCC 700007 / DSM 6899 / JCM 31910 / BCRC 17059 / LMG 24140 / F1</strain>
    </source>
</reference>
<comment type="function">
    <text evidence="1">Involved in the biosynthesis of the osmoprotectant glycine betaine. Catalyzes the irreversible oxidation of betaine aldehyde to the corresponding acid.</text>
</comment>
<comment type="catalytic activity">
    <reaction evidence="1">
        <text>betaine aldehyde + NAD(+) + H2O = glycine betaine + NADH + 2 H(+)</text>
        <dbReference type="Rhea" id="RHEA:15305"/>
        <dbReference type="ChEBI" id="CHEBI:15377"/>
        <dbReference type="ChEBI" id="CHEBI:15378"/>
        <dbReference type="ChEBI" id="CHEBI:15710"/>
        <dbReference type="ChEBI" id="CHEBI:17750"/>
        <dbReference type="ChEBI" id="CHEBI:57540"/>
        <dbReference type="ChEBI" id="CHEBI:57945"/>
        <dbReference type="EC" id="1.2.1.8"/>
    </reaction>
    <physiologicalReaction direction="left-to-right" evidence="1">
        <dbReference type="Rhea" id="RHEA:15306"/>
    </physiologicalReaction>
</comment>
<comment type="cofactor">
    <cofactor evidence="1">
        <name>K(+)</name>
        <dbReference type="ChEBI" id="CHEBI:29103"/>
    </cofactor>
    <text evidence="1">Binds 2 potassium ions per subunit.</text>
</comment>
<comment type="pathway">
    <text evidence="1">Amine and polyamine biosynthesis; betaine biosynthesis via choline pathway; betaine from betaine aldehyde: step 1/1.</text>
</comment>
<comment type="subunit">
    <text evidence="1">Dimer of dimers.</text>
</comment>
<comment type="similarity">
    <text evidence="1">Belongs to the aldehyde dehydrogenase family.</text>
</comment>
<feature type="chain" id="PRO_1000047049" description="Betaine aldehyde dehydrogenase">
    <location>
        <begin position="1"/>
        <end position="490"/>
    </location>
</feature>
<feature type="active site" description="Charge relay system" evidence="1">
    <location>
        <position position="162"/>
    </location>
</feature>
<feature type="active site" description="Proton acceptor" evidence="1">
    <location>
        <position position="252"/>
    </location>
</feature>
<feature type="active site" description="Nucleophile" evidence="1">
    <location>
        <position position="286"/>
    </location>
</feature>
<feature type="active site" description="Charge relay system" evidence="1">
    <location>
        <position position="464"/>
    </location>
</feature>
<feature type="binding site" evidence="1">
    <location>
        <position position="27"/>
    </location>
    <ligand>
        <name>K(+)</name>
        <dbReference type="ChEBI" id="CHEBI:29103"/>
        <label>1</label>
    </ligand>
</feature>
<feature type="binding site" evidence="1">
    <location>
        <position position="93"/>
    </location>
    <ligand>
        <name>K(+)</name>
        <dbReference type="ChEBI" id="CHEBI:29103"/>
        <label>1</label>
    </ligand>
</feature>
<feature type="binding site" evidence="1">
    <location>
        <begin position="150"/>
        <end position="152"/>
    </location>
    <ligand>
        <name>NAD(+)</name>
        <dbReference type="ChEBI" id="CHEBI:57540"/>
    </ligand>
</feature>
<feature type="binding site" evidence="1">
    <location>
        <begin position="176"/>
        <end position="179"/>
    </location>
    <ligand>
        <name>NAD(+)</name>
        <dbReference type="ChEBI" id="CHEBI:57540"/>
    </ligand>
</feature>
<feature type="binding site" evidence="1">
    <location>
        <position position="180"/>
    </location>
    <ligand>
        <name>K(+)</name>
        <dbReference type="ChEBI" id="CHEBI:29103"/>
        <label>1</label>
    </ligand>
</feature>
<feature type="binding site" evidence="1">
    <location>
        <begin position="230"/>
        <end position="233"/>
    </location>
    <ligand>
        <name>NAD(+)</name>
        <dbReference type="ChEBI" id="CHEBI:57540"/>
    </ligand>
</feature>
<feature type="binding site" evidence="1">
    <location>
        <position position="246"/>
    </location>
    <ligand>
        <name>K(+)</name>
        <dbReference type="ChEBI" id="CHEBI:29103"/>
        <label>2</label>
    </ligand>
</feature>
<feature type="binding site" evidence="1">
    <location>
        <position position="254"/>
    </location>
    <ligand>
        <name>NAD(+)</name>
        <dbReference type="ChEBI" id="CHEBI:57540"/>
    </ligand>
</feature>
<feature type="binding site" description="covalent" evidence="1">
    <location>
        <position position="286"/>
    </location>
    <ligand>
        <name>NAD(+)</name>
        <dbReference type="ChEBI" id="CHEBI:57540"/>
    </ligand>
</feature>
<feature type="binding site" evidence="1">
    <location>
        <position position="387"/>
    </location>
    <ligand>
        <name>NAD(+)</name>
        <dbReference type="ChEBI" id="CHEBI:57540"/>
    </ligand>
</feature>
<feature type="binding site" evidence="1">
    <location>
        <position position="457"/>
    </location>
    <ligand>
        <name>K(+)</name>
        <dbReference type="ChEBI" id="CHEBI:29103"/>
        <label>2</label>
    </ligand>
</feature>
<feature type="binding site" evidence="1">
    <location>
        <position position="460"/>
    </location>
    <ligand>
        <name>K(+)</name>
        <dbReference type="ChEBI" id="CHEBI:29103"/>
        <label>2</label>
    </ligand>
</feature>
<feature type="site" description="Seems to be a necessary countercharge to the potassium cations" evidence="1">
    <location>
        <position position="248"/>
    </location>
</feature>
<feature type="modified residue" description="Cysteine sulfenic acid (-SOH)" evidence="1">
    <location>
        <position position="286"/>
    </location>
</feature>
<accession>A5WA96</accession>
<protein>
    <recommendedName>
        <fullName evidence="1">Betaine aldehyde dehydrogenase</fullName>
        <shortName evidence="1">BADH</shortName>
        <ecNumber evidence="1">1.2.1.8</ecNumber>
    </recommendedName>
</protein>
<evidence type="ECO:0000255" key="1">
    <source>
        <dbReference type="HAMAP-Rule" id="MF_00804"/>
    </source>
</evidence>
<dbReference type="EC" id="1.2.1.8" evidence="1"/>
<dbReference type="EMBL" id="CP000712">
    <property type="protein sequence ID" value="ABQ81056.1"/>
    <property type="molecule type" value="Genomic_DNA"/>
</dbReference>
<dbReference type="SMR" id="A5WA96"/>
<dbReference type="KEGG" id="ppf:Pput_4936"/>
<dbReference type="eggNOG" id="COG1012">
    <property type="taxonomic scope" value="Bacteria"/>
</dbReference>
<dbReference type="HOGENOM" id="CLU_005391_0_0_6"/>
<dbReference type="UniPathway" id="UPA00529">
    <property type="reaction ID" value="UER00386"/>
</dbReference>
<dbReference type="GO" id="GO:0008802">
    <property type="term" value="F:betaine-aldehyde dehydrogenase (NAD+) activity"/>
    <property type="evidence" value="ECO:0007669"/>
    <property type="project" value="UniProtKB-UniRule"/>
</dbReference>
<dbReference type="GO" id="GO:0046872">
    <property type="term" value="F:metal ion binding"/>
    <property type="evidence" value="ECO:0007669"/>
    <property type="project" value="UniProtKB-KW"/>
</dbReference>
<dbReference type="GO" id="GO:0019285">
    <property type="term" value="P:glycine betaine biosynthetic process from choline"/>
    <property type="evidence" value="ECO:0007669"/>
    <property type="project" value="UniProtKB-UniRule"/>
</dbReference>
<dbReference type="CDD" id="cd07090">
    <property type="entry name" value="ALDH_F9_TMBADH"/>
    <property type="match status" value="1"/>
</dbReference>
<dbReference type="FunFam" id="3.40.309.10:FF:000014">
    <property type="entry name" value="NAD/NADP-dependent betaine aldehyde dehydrogenase"/>
    <property type="match status" value="1"/>
</dbReference>
<dbReference type="FunFam" id="3.40.605.10:FF:000007">
    <property type="entry name" value="NAD/NADP-dependent betaine aldehyde dehydrogenase"/>
    <property type="match status" value="1"/>
</dbReference>
<dbReference type="Gene3D" id="3.40.605.10">
    <property type="entry name" value="Aldehyde Dehydrogenase, Chain A, domain 1"/>
    <property type="match status" value="1"/>
</dbReference>
<dbReference type="Gene3D" id="3.40.309.10">
    <property type="entry name" value="Aldehyde Dehydrogenase, Chain A, domain 2"/>
    <property type="match status" value="1"/>
</dbReference>
<dbReference type="HAMAP" id="MF_00804">
    <property type="entry name" value="BADH"/>
    <property type="match status" value="1"/>
</dbReference>
<dbReference type="InterPro" id="IPR016161">
    <property type="entry name" value="Ald_DH/histidinol_DH"/>
</dbReference>
<dbReference type="InterPro" id="IPR016163">
    <property type="entry name" value="Ald_DH_C"/>
</dbReference>
<dbReference type="InterPro" id="IPR016160">
    <property type="entry name" value="Ald_DH_CS_CYS"/>
</dbReference>
<dbReference type="InterPro" id="IPR029510">
    <property type="entry name" value="Ald_DH_CS_GLU"/>
</dbReference>
<dbReference type="InterPro" id="IPR016162">
    <property type="entry name" value="Ald_DH_N"/>
</dbReference>
<dbReference type="InterPro" id="IPR015590">
    <property type="entry name" value="Aldehyde_DH_dom"/>
</dbReference>
<dbReference type="InterPro" id="IPR011264">
    <property type="entry name" value="BADH"/>
</dbReference>
<dbReference type="NCBIfam" id="TIGR01804">
    <property type="entry name" value="BADH"/>
    <property type="match status" value="1"/>
</dbReference>
<dbReference type="NCBIfam" id="NF009725">
    <property type="entry name" value="PRK13252.1"/>
    <property type="match status" value="1"/>
</dbReference>
<dbReference type="PANTHER" id="PTHR11699">
    <property type="entry name" value="ALDEHYDE DEHYDROGENASE-RELATED"/>
    <property type="match status" value="1"/>
</dbReference>
<dbReference type="Pfam" id="PF00171">
    <property type="entry name" value="Aldedh"/>
    <property type="match status" value="1"/>
</dbReference>
<dbReference type="SUPFAM" id="SSF53720">
    <property type="entry name" value="ALDH-like"/>
    <property type="match status" value="1"/>
</dbReference>
<dbReference type="PROSITE" id="PS00070">
    <property type="entry name" value="ALDEHYDE_DEHYDR_CYS"/>
    <property type="match status" value="1"/>
</dbReference>
<dbReference type="PROSITE" id="PS00687">
    <property type="entry name" value="ALDEHYDE_DEHYDR_GLU"/>
    <property type="match status" value="1"/>
</dbReference>